<dbReference type="EMBL" id="CP000304">
    <property type="protein sequence ID" value="ABP80241.1"/>
    <property type="molecule type" value="Genomic_DNA"/>
</dbReference>
<dbReference type="RefSeq" id="WP_011913702.1">
    <property type="nucleotide sequence ID" value="NC_009434.1"/>
</dbReference>
<dbReference type="SMR" id="A4VMP0"/>
<dbReference type="GeneID" id="66820772"/>
<dbReference type="KEGG" id="psa:PST_2591"/>
<dbReference type="eggNOG" id="COG1677">
    <property type="taxonomic scope" value="Bacteria"/>
</dbReference>
<dbReference type="HOGENOM" id="CLU_147249_0_0_6"/>
<dbReference type="Proteomes" id="UP000000233">
    <property type="component" value="Chromosome"/>
</dbReference>
<dbReference type="GO" id="GO:0009425">
    <property type="term" value="C:bacterial-type flagellum basal body"/>
    <property type="evidence" value="ECO:0007669"/>
    <property type="project" value="UniProtKB-SubCell"/>
</dbReference>
<dbReference type="GO" id="GO:0003774">
    <property type="term" value="F:cytoskeletal motor activity"/>
    <property type="evidence" value="ECO:0007669"/>
    <property type="project" value="InterPro"/>
</dbReference>
<dbReference type="GO" id="GO:0005198">
    <property type="term" value="F:structural molecule activity"/>
    <property type="evidence" value="ECO:0007669"/>
    <property type="project" value="InterPro"/>
</dbReference>
<dbReference type="GO" id="GO:0071973">
    <property type="term" value="P:bacterial-type flagellum-dependent cell motility"/>
    <property type="evidence" value="ECO:0007669"/>
    <property type="project" value="InterPro"/>
</dbReference>
<dbReference type="HAMAP" id="MF_00724">
    <property type="entry name" value="FliE"/>
    <property type="match status" value="1"/>
</dbReference>
<dbReference type="InterPro" id="IPR001624">
    <property type="entry name" value="FliE"/>
</dbReference>
<dbReference type="NCBIfam" id="TIGR00205">
    <property type="entry name" value="fliE"/>
    <property type="match status" value="1"/>
</dbReference>
<dbReference type="PANTHER" id="PTHR34653">
    <property type="match status" value="1"/>
</dbReference>
<dbReference type="PANTHER" id="PTHR34653:SF1">
    <property type="entry name" value="FLAGELLAR HOOK-BASAL BODY COMPLEX PROTEIN FLIE"/>
    <property type="match status" value="1"/>
</dbReference>
<dbReference type="Pfam" id="PF02049">
    <property type="entry name" value="FliE"/>
    <property type="match status" value="1"/>
</dbReference>
<dbReference type="PRINTS" id="PR01006">
    <property type="entry name" value="FLGHOOKFLIE"/>
</dbReference>
<feature type="chain" id="PRO_1000045870" description="Flagellar hook-basal body complex protein FliE">
    <location>
        <begin position="1"/>
        <end position="109"/>
    </location>
</feature>
<comment type="subcellular location">
    <subcellularLocation>
        <location evidence="1">Bacterial flagellum basal body</location>
    </subcellularLocation>
</comment>
<comment type="similarity">
    <text evidence="1">Belongs to the FliE family.</text>
</comment>
<accession>A4VMP0</accession>
<evidence type="ECO:0000255" key="1">
    <source>
        <dbReference type="HAMAP-Rule" id="MF_00724"/>
    </source>
</evidence>
<gene>
    <name evidence="1" type="primary">fliE</name>
    <name type="ordered locus">PST_2591</name>
</gene>
<name>FLIE_STUS1</name>
<proteinExistence type="inferred from homology"/>
<protein>
    <recommendedName>
        <fullName evidence="1">Flagellar hook-basal body complex protein FliE</fullName>
    </recommendedName>
</protein>
<organism>
    <name type="scientific">Stutzerimonas stutzeri (strain A1501)</name>
    <name type="common">Pseudomonas stutzeri</name>
    <dbReference type="NCBI Taxonomy" id="379731"/>
    <lineage>
        <taxon>Bacteria</taxon>
        <taxon>Pseudomonadati</taxon>
        <taxon>Pseudomonadota</taxon>
        <taxon>Gammaproteobacteria</taxon>
        <taxon>Pseudomonadales</taxon>
        <taxon>Pseudomonadaceae</taxon>
        <taxon>Stutzerimonas</taxon>
    </lineage>
</organism>
<sequence length="109" mass="12002">MSQGVQFNRLMLEMRAMQTDAMARSKPEVQTQEVGAPSFSDMLGQAVNKVHETQQVSSQLASAFEMGQGGVDLTEVMIASQKASVSFQAMTQVRNKLVQAYQDIMQMPV</sequence>
<keyword id="KW-0975">Bacterial flagellum</keyword>
<keyword id="KW-1185">Reference proteome</keyword>
<reference key="1">
    <citation type="journal article" date="2008" name="Proc. Natl. Acad. Sci. U.S.A.">
        <title>Nitrogen fixation island and rhizosphere competence traits in the genome of root-associated Pseudomonas stutzeri A1501.</title>
        <authorList>
            <person name="Yan Y."/>
            <person name="Yang J."/>
            <person name="Dou Y."/>
            <person name="Chen M."/>
            <person name="Ping S."/>
            <person name="Peng J."/>
            <person name="Lu W."/>
            <person name="Zhang W."/>
            <person name="Yao Z."/>
            <person name="Li H."/>
            <person name="Liu W."/>
            <person name="He S."/>
            <person name="Geng L."/>
            <person name="Zhang X."/>
            <person name="Yang F."/>
            <person name="Yu H."/>
            <person name="Zhan Y."/>
            <person name="Li D."/>
            <person name="Lin Z."/>
            <person name="Wang Y."/>
            <person name="Elmerich C."/>
            <person name="Lin M."/>
            <person name="Jin Q."/>
        </authorList>
    </citation>
    <scope>NUCLEOTIDE SEQUENCE [LARGE SCALE GENOMIC DNA]</scope>
    <source>
        <strain>A1501</strain>
    </source>
</reference>